<sequence length="101" mass="11443">MNNTEFSKIADITIAYITDTIEEQDKEASIDVDLQGDILNLDTDKGIYVINKQSAAKEIWLSSPVSGPCHFFYEQGKWKNRVGLELMAILTEELDIDFNNV</sequence>
<feature type="chain" id="PRO_1000010951" description="Iron-sulfur cluster assembly protein CyaY">
    <location>
        <begin position="1"/>
        <end position="101"/>
    </location>
</feature>
<organism>
    <name type="scientific">Rickettsia akari (strain Hartford)</name>
    <dbReference type="NCBI Taxonomy" id="293614"/>
    <lineage>
        <taxon>Bacteria</taxon>
        <taxon>Pseudomonadati</taxon>
        <taxon>Pseudomonadota</taxon>
        <taxon>Alphaproteobacteria</taxon>
        <taxon>Rickettsiales</taxon>
        <taxon>Rickettsiaceae</taxon>
        <taxon>Rickettsieae</taxon>
        <taxon>Rickettsia</taxon>
        <taxon>spotted fever group</taxon>
    </lineage>
</organism>
<evidence type="ECO:0000255" key="1">
    <source>
        <dbReference type="HAMAP-Rule" id="MF_00142"/>
    </source>
</evidence>
<dbReference type="EMBL" id="CP000847">
    <property type="protein sequence ID" value="ABV74780.1"/>
    <property type="molecule type" value="Genomic_DNA"/>
</dbReference>
<dbReference type="RefSeq" id="WP_012149414.1">
    <property type="nucleotide sequence ID" value="NC_009881.1"/>
</dbReference>
<dbReference type="SMR" id="A8GN05"/>
<dbReference type="STRING" id="293614.A1C_02395"/>
<dbReference type="KEGG" id="rak:A1C_02395"/>
<dbReference type="eggNOG" id="COG1965">
    <property type="taxonomic scope" value="Bacteria"/>
</dbReference>
<dbReference type="HOGENOM" id="CLU_080880_4_1_5"/>
<dbReference type="Proteomes" id="UP000006830">
    <property type="component" value="Chromosome"/>
</dbReference>
<dbReference type="GO" id="GO:0005737">
    <property type="term" value="C:cytoplasm"/>
    <property type="evidence" value="ECO:0007669"/>
    <property type="project" value="UniProtKB-ARBA"/>
</dbReference>
<dbReference type="GO" id="GO:0051537">
    <property type="term" value="F:2 iron, 2 sulfur cluster binding"/>
    <property type="evidence" value="ECO:0007669"/>
    <property type="project" value="TreeGrafter"/>
</dbReference>
<dbReference type="GO" id="GO:0008199">
    <property type="term" value="F:ferric iron binding"/>
    <property type="evidence" value="ECO:0007669"/>
    <property type="project" value="InterPro"/>
</dbReference>
<dbReference type="GO" id="GO:0008198">
    <property type="term" value="F:ferrous iron binding"/>
    <property type="evidence" value="ECO:0007669"/>
    <property type="project" value="TreeGrafter"/>
</dbReference>
<dbReference type="GO" id="GO:0004322">
    <property type="term" value="F:ferroxidase activity"/>
    <property type="evidence" value="ECO:0007669"/>
    <property type="project" value="TreeGrafter"/>
</dbReference>
<dbReference type="GO" id="GO:0034986">
    <property type="term" value="F:iron chaperone activity"/>
    <property type="evidence" value="ECO:0007669"/>
    <property type="project" value="TreeGrafter"/>
</dbReference>
<dbReference type="GO" id="GO:0006879">
    <property type="term" value="P:intracellular iron ion homeostasis"/>
    <property type="evidence" value="ECO:0007669"/>
    <property type="project" value="TreeGrafter"/>
</dbReference>
<dbReference type="GO" id="GO:0016226">
    <property type="term" value="P:iron-sulfur cluster assembly"/>
    <property type="evidence" value="ECO:0007669"/>
    <property type="project" value="UniProtKB-UniRule"/>
</dbReference>
<dbReference type="Gene3D" id="3.30.920.10">
    <property type="entry name" value="Frataxin/CyaY"/>
    <property type="match status" value="1"/>
</dbReference>
<dbReference type="HAMAP" id="MF_00142">
    <property type="entry name" value="CyaY"/>
    <property type="match status" value="1"/>
</dbReference>
<dbReference type="InterPro" id="IPR047584">
    <property type="entry name" value="CyaY"/>
</dbReference>
<dbReference type="InterPro" id="IPR002908">
    <property type="entry name" value="Frataxin/CyaY"/>
</dbReference>
<dbReference type="InterPro" id="IPR036524">
    <property type="entry name" value="Frataxin/CyaY_sf"/>
</dbReference>
<dbReference type="InterPro" id="IPR020895">
    <property type="entry name" value="Frataxin_CS"/>
</dbReference>
<dbReference type="NCBIfam" id="TIGR03421">
    <property type="entry name" value="FeS_CyaY"/>
    <property type="match status" value="1"/>
</dbReference>
<dbReference type="PANTHER" id="PTHR16821">
    <property type="entry name" value="FRATAXIN"/>
    <property type="match status" value="1"/>
</dbReference>
<dbReference type="PANTHER" id="PTHR16821:SF2">
    <property type="entry name" value="FRATAXIN, MITOCHONDRIAL"/>
    <property type="match status" value="1"/>
</dbReference>
<dbReference type="Pfam" id="PF01491">
    <property type="entry name" value="Frataxin_Cyay"/>
    <property type="match status" value="1"/>
</dbReference>
<dbReference type="SMART" id="SM01219">
    <property type="entry name" value="Frataxin_Cyay"/>
    <property type="match status" value="1"/>
</dbReference>
<dbReference type="SUPFAM" id="SSF55387">
    <property type="entry name" value="Frataxin/Nqo15-like"/>
    <property type="match status" value="1"/>
</dbReference>
<dbReference type="PROSITE" id="PS01344">
    <property type="entry name" value="FRATAXIN_1"/>
    <property type="match status" value="1"/>
</dbReference>
<dbReference type="PROSITE" id="PS50810">
    <property type="entry name" value="FRATAXIN_2"/>
    <property type="match status" value="1"/>
</dbReference>
<keyword id="KW-0408">Iron</keyword>
<keyword id="KW-0479">Metal-binding</keyword>
<accession>A8GN05</accession>
<protein>
    <recommendedName>
        <fullName evidence="1">Iron-sulfur cluster assembly protein CyaY</fullName>
    </recommendedName>
</protein>
<reference key="1">
    <citation type="submission" date="2007-09" db="EMBL/GenBank/DDBJ databases">
        <title>Complete genome sequence of Rickettsia akari.</title>
        <authorList>
            <person name="Madan A."/>
            <person name="Fahey J."/>
            <person name="Helton E."/>
            <person name="Ketteman M."/>
            <person name="Madan A."/>
            <person name="Rodrigues S."/>
            <person name="Sanchez A."/>
            <person name="Whiting M."/>
            <person name="Dasch G."/>
            <person name="Eremeeva M."/>
        </authorList>
    </citation>
    <scope>NUCLEOTIDE SEQUENCE [LARGE SCALE GENOMIC DNA]</scope>
    <source>
        <strain>Hartford</strain>
    </source>
</reference>
<name>CYAY_RICAH</name>
<proteinExistence type="inferred from homology"/>
<gene>
    <name evidence="1" type="primary">cyaY</name>
    <name type="ordered locus">A1C_02395</name>
</gene>
<comment type="function">
    <text evidence="1">Involved in iron-sulfur (Fe-S) cluster assembly. May act as a regulator of Fe-S biogenesis.</text>
</comment>
<comment type="similarity">
    <text evidence="1">Belongs to the frataxin family.</text>
</comment>